<reference key="1">
    <citation type="journal article" date="2003" name="Proc. Natl. Acad. Sci. U.S.A.">
        <title>The complete genome sequence of Chromobacterium violaceum reveals remarkable and exploitable bacterial adaptability.</title>
        <authorList>
            <person name="Vasconcelos A.T.R."/>
            <person name="de Almeida D.F."/>
            <person name="Hungria M."/>
            <person name="Guimaraes C.T."/>
            <person name="Antonio R.V."/>
            <person name="Almeida F.C."/>
            <person name="de Almeida L.G.P."/>
            <person name="de Almeida R."/>
            <person name="Alves-Gomes J.A."/>
            <person name="Andrade E.M."/>
            <person name="Araripe J."/>
            <person name="de Araujo M.F.F."/>
            <person name="Astolfi-Filho S."/>
            <person name="Azevedo V."/>
            <person name="Baptista A.J."/>
            <person name="Bataus L.A.M."/>
            <person name="Batista J.S."/>
            <person name="Belo A."/>
            <person name="van den Berg C."/>
            <person name="Bogo M."/>
            <person name="Bonatto S."/>
            <person name="Bordignon J."/>
            <person name="Brigido M.M."/>
            <person name="Brito C.A."/>
            <person name="Brocchi M."/>
            <person name="Burity H.A."/>
            <person name="Camargo A.A."/>
            <person name="Cardoso D.D.P."/>
            <person name="Carneiro N.P."/>
            <person name="Carraro D.M."/>
            <person name="Carvalho C.M.B."/>
            <person name="Cascardo J.C.M."/>
            <person name="Cavada B.S."/>
            <person name="Chueire L.M.O."/>
            <person name="Creczynski-Pasa T.B."/>
            <person name="Cunha-Junior N.C."/>
            <person name="Fagundes N."/>
            <person name="Falcao C.L."/>
            <person name="Fantinatti F."/>
            <person name="Farias I.P."/>
            <person name="Felipe M.S.S."/>
            <person name="Ferrari L.P."/>
            <person name="Ferro J.A."/>
            <person name="Ferro M.I.T."/>
            <person name="Franco G.R."/>
            <person name="Freitas N.S.A."/>
            <person name="Furlan L.R."/>
            <person name="Gazzinelli R.T."/>
            <person name="Gomes E.A."/>
            <person name="Goncalves P.R."/>
            <person name="Grangeiro T.B."/>
            <person name="Grattapaglia D."/>
            <person name="Grisard E.C."/>
            <person name="Hanna E.S."/>
            <person name="Jardim S.N."/>
            <person name="Laurino J."/>
            <person name="Leoi L.C.T."/>
            <person name="Lima L.F.A."/>
            <person name="Loureiro M.F."/>
            <person name="Lyra M.C.C.P."/>
            <person name="Madeira H.M.F."/>
            <person name="Manfio G.P."/>
            <person name="Maranhao A.Q."/>
            <person name="Martins W.S."/>
            <person name="di Mauro S.M.Z."/>
            <person name="de Medeiros S.R.B."/>
            <person name="Meissner R.V."/>
            <person name="Moreira M.A.M."/>
            <person name="Nascimento F.F."/>
            <person name="Nicolas M.F."/>
            <person name="Oliveira J.G."/>
            <person name="Oliveira S.C."/>
            <person name="Paixao R.F.C."/>
            <person name="Parente J.A."/>
            <person name="Pedrosa F.O."/>
            <person name="Pena S.D.J."/>
            <person name="Pereira J.O."/>
            <person name="Pereira M."/>
            <person name="Pinto L.S.R.C."/>
            <person name="Pinto L.S."/>
            <person name="Porto J.I.R."/>
            <person name="Potrich D.P."/>
            <person name="Ramalho-Neto C.E."/>
            <person name="Reis A.M.M."/>
            <person name="Rigo L.U."/>
            <person name="Rondinelli E."/>
            <person name="Santos E.B.P."/>
            <person name="Santos F.R."/>
            <person name="Schneider M.P.C."/>
            <person name="Seuanez H.N."/>
            <person name="Silva A.M.R."/>
            <person name="da Silva A.L.C."/>
            <person name="Silva D.W."/>
            <person name="Silva R."/>
            <person name="Simoes I.C."/>
            <person name="Simon D."/>
            <person name="Soares C.M.A."/>
            <person name="Soares R.B.A."/>
            <person name="Souza E.M."/>
            <person name="Souza K.R.L."/>
            <person name="Souza R.C."/>
            <person name="Steffens M.B.R."/>
            <person name="Steindel M."/>
            <person name="Teixeira S.R."/>
            <person name="Urmenyi T."/>
            <person name="Vettore A."/>
            <person name="Wassem R."/>
            <person name="Zaha A."/>
            <person name="Simpson A.J.G."/>
        </authorList>
    </citation>
    <scope>NUCLEOTIDE SEQUENCE [LARGE SCALE GENOMIC DNA]</scope>
    <source>
        <strain>ATCC 12472 / DSM 30191 / JCM 1249 / CCUG 213 / NBRC 12614 / NCIMB 9131 / NCTC 9757 / MK</strain>
    </source>
</reference>
<feature type="chain" id="PRO_0000356428" description="Large ribosomal subunit protein bL33">
    <location>
        <begin position="1"/>
        <end position="51"/>
    </location>
</feature>
<feature type="region of interest" description="Disordered" evidence="2">
    <location>
        <begin position="1"/>
        <end position="23"/>
    </location>
</feature>
<feature type="compositionally biased region" description="Polar residues" evidence="2">
    <location>
        <begin position="10"/>
        <end position="20"/>
    </location>
</feature>
<accession>Q7NSH1</accession>
<proteinExistence type="inferred from homology"/>
<comment type="similarity">
    <text evidence="1">Belongs to the bacterial ribosomal protein bL33 family.</text>
</comment>
<organism>
    <name type="scientific">Chromobacterium violaceum (strain ATCC 12472 / DSM 30191 / JCM 1249 / CCUG 213 / NBRC 12614 / NCIMB 9131 / NCTC 9757 / MK)</name>
    <dbReference type="NCBI Taxonomy" id="243365"/>
    <lineage>
        <taxon>Bacteria</taxon>
        <taxon>Pseudomonadati</taxon>
        <taxon>Pseudomonadota</taxon>
        <taxon>Betaproteobacteria</taxon>
        <taxon>Neisseriales</taxon>
        <taxon>Chromobacteriaceae</taxon>
        <taxon>Chromobacterium</taxon>
    </lineage>
</organism>
<sequence length="51" mass="6041">MRDKIKLESSAGTGHFYTTTKNKRTMPEKMEIKKFDPVARKHVLYKETKLK</sequence>
<evidence type="ECO:0000255" key="1">
    <source>
        <dbReference type="HAMAP-Rule" id="MF_00294"/>
    </source>
</evidence>
<evidence type="ECO:0000256" key="2">
    <source>
        <dbReference type="SAM" id="MobiDB-lite"/>
    </source>
</evidence>
<evidence type="ECO:0000305" key="3"/>
<name>RL33_CHRVO</name>
<dbReference type="EMBL" id="AE016825">
    <property type="protein sequence ID" value="AAQ61116.1"/>
    <property type="molecule type" value="Genomic_DNA"/>
</dbReference>
<dbReference type="RefSeq" id="WP_011137002.1">
    <property type="nucleotide sequence ID" value="NC_005085.1"/>
</dbReference>
<dbReference type="SMR" id="Q7NSH1"/>
<dbReference type="STRING" id="243365.CV_3455"/>
<dbReference type="GeneID" id="66364674"/>
<dbReference type="KEGG" id="cvi:CV_3455"/>
<dbReference type="eggNOG" id="COG0267">
    <property type="taxonomic scope" value="Bacteria"/>
</dbReference>
<dbReference type="HOGENOM" id="CLU_190949_1_1_4"/>
<dbReference type="OrthoDB" id="21586at2"/>
<dbReference type="Proteomes" id="UP000001424">
    <property type="component" value="Chromosome"/>
</dbReference>
<dbReference type="GO" id="GO:0022625">
    <property type="term" value="C:cytosolic large ribosomal subunit"/>
    <property type="evidence" value="ECO:0007669"/>
    <property type="project" value="TreeGrafter"/>
</dbReference>
<dbReference type="GO" id="GO:0003735">
    <property type="term" value="F:structural constituent of ribosome"/>
    <property type="evidence" value="ECO:0007669"/>
    <property type="project" value="InterPro"/>
</dbReference>
<dbReference type="GO" id="GO:0006412">
    <property type="term" value="P:translation"/>
    <property type="evidence" value="ECO:0007669"/>
    <property type="project" value="UniProtKB-UniRule"/>
</dbReference>
<dbReference type="FunFam" id="2.20.28.120:FF:000001">
    <property type="entry name" value="50S ribosomal protein L33"/>
    <property type="match status" value="1"/>
</dbReference>
<dbReference type="Gene3D" id="2.20.28.120">
    <property type="entry name" value="Ribosomal protein L33"/>
    <property type="match status" value="1"/>
</dbReference>
<dbReference type="HAMAP" id="MF_00294">
    <property type="entry name" value="Ribosomal_bL33"/>
    <property type="match status" value="1"/>
</dbReference>
<dbReference type="InterPro" id="IPR001705">
    <property type="entry name" value="Ribosomal_bL33"/>
</dbReference>
<dbReference type="InterPro" id="IPR018264">
    <property type="entry name" value="Ribosomal_bL33_CS"/>
</dbReference>
<dbReference type="InterPro" id="IPR038584">
    <property type="entry name" value="Ribosomal_bL33_sf"/>
</dbReference>
<dbReference type="InterPro" id="IPR011332">
    <property type="entry name" value="Ribosomal_zn-bd"/>
</dbReference>
<dbReference type="NCBIfam" id="NF001764">
    <property type="entry name" value="PRK00504.1"/>
    <property type="match status" value="1"/>
</dbReference>
<dbReference type="NCBIfam" id="NF001860">
    <property type="entry name" value="PRK00595.1"/>
    <property type="match status" value="1"/>
</dbReference>
<dbReference type="NCBIfam" id="TIGR01023">
    <property type="entry name" value="rpmG_bact"/>
    <property type="match status" value="1"/>
</dbReference>
<dbReference type="PANTHER" id="PTHR15238">
    <property type="entry name" value="54S RIBOSOMAL PROTEIN L39, MITOCHONDRIAL"/>
    <property type="match status" value="1"/>
</dbReference>
<dbReference type="PANTHER" id="PTHR15238:SF1">
    <property type="entry name" value="LARGE RIBOSOMAL SUBUNIT PROTEIN BL33M"/>
    <property type="match status" value="1"/>
</dbReference>
<dbReference type="Pfam" id="PF00471">
    <property type="entry name" value="Ribosomal_L33"/>
    <property type="match status" value="1"/>
</dbReference>
<dbReference type="SUPFAM" id="SSF57829">
    <property type="entry name" value="Zn-binding ribosomal proteins"/>
    <property type="match status" value="1"/>
</dbReference>
<dbReference type="PROSITE" id="PS00582">
    <property type="entry name" value="RIBOSOMAL_L33"/>
    <property type="match status" value="1"/>
</dbReference>
<keyword id="KW-1185">Reference proteome</keyword>
<keyword id="KW-0687">Ribonucleoprotein</keyword>
<keyword id="KW-0689">Ribosomal protein</keyword>
<gene>
    <name evidence="1" type="primary">rpmG</name>
    <name type="ordered locus">CV_3455</name>
</gene>
<protein>
    <recommendedName>
        <fullName evidence="1">Large ribosomal subunit protein bL33</fullName>
    </recommendedName>
    <alternativeName>
        <fullName evidence="3">50S ribosomal protein L33</fullName>
    </alternativeName>
</protein>